<comment type="function">
    <text evidence="6">Might have a role in sequestration of chitin oligosaccharides (breakdown products of fungal cell walls that are released during invasion and act as triggers of host immunity) to dampen host defense.</text>
</comment>
<comment type="induction">
    <text evidence="3">Expressed constitutively with no significant difference during colonization of banana roots.</text>
</comment>
<comment type="domain">
    <text evidence="6">The LysM (lysin motif) domains are small globular domains involved in binding chitin in eukaryotes. Lys1 contains one LysM domain.</text>
</comment>
<comment type="miscellaneous">
    <text evidence="5">In plants, chitin acts as a microbe-associated molecular pattern (MAMP) that is recognized by lysin motif (LysM)-containing plant cell surface-localized pattern recognition receptors (PRRs) that activate a plethora of downstream immune responses.</text>
</comment>
<comment type="similarity">
    <text evidence="5">Belongs to the secreted LysM effector family.</text>
</comment>
<name>LYSM1_POCC1</name>
<sequence length="123" mass="13464">MMGLAKTLLLASQLTAVVVATPTINNDNELTTKWPVCVKPTKVLDERIPTVKRGPVETPLPTQPGMVNNCNKFCWVQAGNKCYQVAMENHISLADFLKWNPGAGSDCRTLWANTYACVGVSKK</sequence>
<protein>
    <recommendedName>
        <fullName evidence="4">Secreted LysM effector Lys1</fullName>
    </recommendedName>
    <alternativeName>
        <fullName evidence="4">LysM domain-containing protein 1</fullName>
    </alternativeName>
</protein>
<gene>
    <name evidence="4" type="primary">Lys1</name>
    <name type="ORF">I1G_00006995</name>
</gene>
<accession>A0A4Q7JJ79</accession>
<feature type="signal peptide" evidence="1">
    <location>
        <begin position="1"/>
        <end position="20"/>
    </location>
</feature>
<feature type="chain" id="PRO_5020854002" description="Secreted LysM effector Lys1">
    <location>
        <begin position="21"/>
        <end position="123"/>
    </location>
</feature>
<feature type="domain" description="LysM" evidence="2">
    <location>
        <begin position="72"/>
        <end position="118"/>
    </location>
</feature>
<proteinExistence type="evidence at transcript level"/>
<dbReference type="EMBL" id="AOSW02000833">
    <property type="protein sequence ID" value="RZR59939.1"/>
    <property type="molecule type" value="Genomic_DNA"/>
</dbReference>
<dbReference type="STRING" id="1052797.A0A4Q7JJ79"/>
<dbReference type="GO" id="GO:0008061">
    <property type="term" value="F:chitin binding"/>
    <property type="evidence" value="ECO:0007669"/>
    <property type="project" value="UniProtKB-KW"/>
</dbReference>
<dbReference type="Gene3D" id="3.10.350.10">
    <property type="entry name" value="LysM domain"/>
    <property type="match status" value="1"/>
</dbReference>
<dbReference type="InterPro" id="IPR052210">
    <property type="entry name" value="LysM1-like"/>
</dbReference>
<dbReference type="InterPro" id="IPR018392">
    <property type="entry name" value="LysM_dom"/>
</dbReference>
<dbReference type="InterPro" id="IPR036779">
    <property type="entry name" value="LysM_dom_sf"/>
</dbReference>
<dbReference type="PANTHER" id="PTHR34997">
    <property type="entry name" value="AM15"/>
    <property type="match status" value="1"/>
</dbReference>
<dbReference type="PANTHER" id="PTHR34997:SF2">
    <property type="entry name" value="LYSM DOMAIN-CONTAINING PROTEIN-RELATED"/>
    <property type="match status" value="1"/>
</dbReference>
<dbReference type="SUPFAM" id="SSF54106">
    <property type="entry name" value="LysM domain"/>
    <property type="match status" value="1"/>
</dbReference>
<dbReference type="PROSITE" id="PS51782">
    <property type="entry name" value="LYSM"/>
    <property type="match status" value="1"/>
</dbReference>
<evidence type="ECO:0000255" key="1"/>
<evidence type="ECO:0000255" key="2">
    <source>
        <dbReference type="PROSITE-ProRule" id="PRU01118"/>
    </source>
</evidence>
<evidence type="ECO:0000269" key="3">
    <source>
    </source>
</evidence>
<evidence type="ECO:0000303" key="4">
    <source>
    </source>
</evidence>
<evidence type="ECO:0000305" key="5"/>
<evidence type="ECO:0000305" key="6">
    <source>
    </source>
</evidence>
<keyword id="KW-0147">Chitin-binding</keyword>
<keyword id="KW-0732">Signal</keyword>
<keyword id="KW-0843">Virulence</keyword>
<reference key="1">
    <citation type="journal article" date="2014" name="Fungal Genet. Biol.">
        <title>Sequencing and functional analysis of the genome of a nematode egg-parasitic fungus, Pochonia chlamydosporia.</title>
        <authorList>
            <person name="Larriba E."/>
            <person name="Jaime M.D."/>
            <person name="Carbonell-Caballero J."/>
            <person name="Conesa A."/>
            <person name="Dopazo J."/>
            <person name="Nislow C."/>
            <person name="Martin-Nieto J."/>
            <person name="Lopez-Llorca L.V."/>
        </authorList>
    </citation>
    <scope>NUCLEOTIDE SEQUENCE [LARGE SCALE GENOMIC DNA]</scope>
    <source>
        <strain>123</strain>
    </source>
</reference>
<reference key="2">
    <citation type="journal article" date="2021" name="Int. J. Mol. Sci.">
        <title>Putative LysM effectors contribute to fungal lifestyle.</title>
        <authorList>
            <person name="Suarez-Fernandez M."/>
            <person name="Aragon-Perez A."/>
            <person name="Lopez-Llorca L.V."/>
            <person name="Lopez-Moya F."/>
        </authorList>
    </citation>
    <scope>DOMAIN</scope>
    <scope>INDUCTION</scope>
</reference>
<organism>
    <name type="scientific">Pochonia chlamydosporia (strain 123)</name>
    <name type="common">Metacordyceps chlamydosporia</name>
    <dbReference type="NCBI Taxonomy" id="1052797"/>
    <lineage>
        <taxon>Eukaryota</taxon>
        <taxon>Fungi</taxon>
        <taxon>Dikarya</taxon>
        <taxon>Ascomycota</taxon>
        <taxon>Pezizomycotina</taxon>
        <taxon>Sordariomycetes</taxon>
        <taxon>Hypocreomycetidae</taxon>
        <taxon>Hypocreales</taxon>
        <taxon>Clavicipitaceae</taxon>
        <taxon>Pochonia</taxon>
    </lineage>
</organism>